<comment type="similarity">
    <text evidence="1">Belongs to the dGTPase family. Type 2 subfamily.</text>
</comment>
<keyword id="KW-0378">Hydrolase</keyword>
<feature type="chain" id="PRO_0000205292" description="Deoxyguanosinetriphosphate triphosphohydrolase-like protein">
    <location>
        <begin position="1"/>
        <end position="384"/>
    </location>
</feature>
<feature type="domain" description="HD" evidence="2">
    <location>
        <begin position="73"/>
        <end position="208"/>
    </location>
</feature>
<feature type="region of interest" description="Disordered" evidence="3">
    <location>
        <begin position="13"/>
        <end position="42"/>
    </location>
</feature>
<feature type="compositionally biased region" description="Basic and acidic residues" evidence="3">
    <location>
        <begin position="28"/>
        <end position="42"/>
    </location>
</feature>
<accession>Q7WR83</accession>
<protein>
    <recommendedName>
        <fullName evidence="1">Deoxyguanosinetriphosphate triphosphohydrolase-like protein</fullName>
    </recommendedName>
</protein>
<gene>
    <name type="ordered locus">BB0073</name>
</gene>
<proteinExistence type="inferred from homology"/>
<reference key="1">
    <citation type="journal article" date="2003" name="Nat. Genet.">
        <title>Comparative analysis of the genome sequences of Bordetella pertussis, Bordetella parapertussis and Bordetella bronchiseptica.</title>
        <authorList>
            <person name="Parkhill J."/>
            <person name="Sebaihia M."/>
            <person name="Preston A."/>
            <person name="Murphy L.D."/>
            <person name="Thomson N.R."/>
            <person name="Harris D.E."/>
            <person name="Holden M.T.G."/>
            <person name="Churcher C.M."/>
            <person name="Bentley S.D."/>
            <person name="Mungall K.L."/>
            <person name="Cerdeno-Tarraga A.-M."/>
            <person name="Temple L."/>
            <person name="James K.D."/>
            <person name="Harris B."/>
            <person name="Quail M.A."/>
            <person name="Achtman M."/>
            <person name="Atkin R."/>
            <person name="Baker S."/>
            <person name="Basham D."/>
            <person name="Bason N."/>
            <person name="Cherevach I."/>
            <person name="Chillingworth T."/>
            <person name="Collins M."/>
            <person name="Cronin A."/>
            <person name="Davis P."/>
            <person name="Doggett J."/>
            <person name="Feltwell T."/>
            <person name="Goble A."/>
            <person name="Hamlin N."/>
            <person name="Hauser H."/>
            <person name="Holroyd S."/>
            <person name="Jagels K."/>
            <person name="Leather S."/>
            <person name="Moule S."/>
            <person name="Norberczak H."/>
            <person name="O'Neil S."/>
            <person name="Ormond D."/>
            <person name="Price C."/>
            <person name="Rabbinowitsch E."/>
            <person name="Rutter S."/>
            <person name="Sanders M."/>
            <person name="Saunders D."/>
            <person name="Seeger K."/>
            <person name="Sharp S."/>
            <person name="Simmonds M."/>
            <person name="Skelton J."/>
            <person name="Squares R."/>
            <person name="Squares S."/>
            <person name="Stevens K."/>
            <person name="Unwin L."/>
            <person name="Whitehead S."/>
            <person name="Barrell B.G."/>
            <person name="Maskell D.J."/>
        </authorList>
    </citation>
    <scope>NUCLEOTIDE SEQUENCE [LARGE SCALE GENOMIC DNA]</scope>
    <source>
        <strain>ATCC BAA-588 / NCTC 13252 / RB50</strain>
    </source>
</reference>
<evidence type="ECO:0000255" key="1">
    <source>
        <dbReference type="HAMAP-Rule" id="MF_01212"/>
    </source>
</evidence>
<evidence type="ECO:0000255" key="2">
    <source>
        <dbReference type="PROSITE-ProRule" id="PRU01175"/>
    </source>
</evidence>
<evidence type="ECO:0000256" key="3">
    <source>
        <dbReference type="SAM" id="MobiDB-lite"/>
    </source>
</evidence>
<sequence>MNKDGTVVLMNELASYASDPSKTRGRRHSEPPPENRTEFQRDRDRIIHSNAFRRLEYKTQVFVNHEGDLFRTRLTHSLEVAQIARTLARSLRVSEDLTEAIALAHDLGHTPFGHAGQDELNACMRELAPQAGGFEHNLQSLRVVDELEERYAEFNGLNLCFETREGILKHCSATHARQLGAVGERFLDRTQPSLEAQLANLADEVAYNNHDVDDGLRSGLITLEQLQEVGIFARHYAEVARRYPQLAPRRATSETIRRMINTLIVDLTATSLARIRDHAPASADDVRRAPPLAGFSAAVRREADELKKFLFDNLYRHYRVVRMTTKAQRIVRELFQAFLGDPRLLPPDYRREQPQDQARAISDYIAGMTDRYAIREHRRLFEMG</sequence>
<organism>
    <name type="scientific">Bordetella bronchiseptica (strain ATCC BAA-588 / NCTC 13252 / RB50)</name>
    <name type="common">Alcaligenes bronchisepticus</name>
    <dbReference type="NCBI Taxonomy" id="257310"/>
    <lineage>
        <taxon>Bacteria</taxon>
        <taxon>Pseudomonadati</taxon>
        <taxon>Pseudomonadota</taxon>
        <taxon>Betaproteobacteria</taxon>
        <taxon>Burkholderiales</taxon>
        <taxon>Alcaligenaceae</taxon>
        <taxon>Bordetella</taxon>
    </lineage>
</organism>
<name>DGTL1_BORBR</name>
<dbReference type="EMBL" id="BX640437">
    <property type="protein sequence ID" value="CAE30575.1"/>
    <property type="molecule type" value="Genomic_DNA"/>
</dbReference>
<dbReference type="RefSeq" id="WP_003806949.1">
    <property type="nucleotide sequence ID" value="NC_002927.3"/>
</dbReference>
<dbReference type="SMR" id="Q7WR83"/>
<dbReference type="KEGG" id="bbr:BB0073"/>
<dbReference type="eggNOG" id="COG0232">
    <property type="taxonomic scope" value="Bacteria"/>
</dbReference>
<dbReference type="HOGENOM" id="CLU_028163_1_0_4"/>
<dbReference type="Proteomes" id="UP000001027">
    <property type="component" value="Chromosome"/>
</dbReference>
<dbReference type="GO" id="GO:0008832">
    <property type="term" value="F:dGTPase activity"/>
    <property type="evidence" value="ECO:0007669"/>
    <property type="project" value="TreeGrafter"/>
</dbReference>
<dbReference type="GO" id="GO:0006203">
    <property type="term" value="P:dGTP catabolic process"/>
    <property type="evidence" value="ECO:0007669"/>
    <property type="project" value="TreeGrafter"/>
</dbReference>
<dbReference type="CDD" id="cd00077">
    <property type="entry name" value="HDc"/>
    <property type="match status" value="1"/>
</dbReference>
<dbReference type="FunFam" id="1.10.3210.10:FF:000024">
    <property type="entry name" value="Deoxyguanosinetriphosphate triphosphohydrolase-like protein"/>
    <property type="match status" value="1"/>
</dbReference>
<dbReference type="Gene3D" id="1.10.3210.10">
    <property type="entry name" value="Hypothetical protein af1432"/>
    <property type="match status" value="1"/>
</dbReference>
<dbReference type="HAMAP" id="MF_01212">
    <property type="entry name" value="dGTPase_type2"/>
    <property type="match status" value="1"/>
</dbReference>
<dbReference type="InterPro" id="IPR006261">
    <property type="entry name" value="dGTPase"/>
</dbReference>
<dbReference type="InterPro" id="IPR050135">
    <property type="entry name" value="dGTPase-like"/>
</dbReference>
<dbReference type="InterPro" id="IPR023023">
    <property type="entry name" value="dNTPase_2"/>
</dbReference>
<dbReference type="InterPro" id="IPR003607">
    <property type="entry name" value="HD/PDEase_dom"/>
</dbReference>
<dbReference type="InterPro" id="IPR006674">
    <property type="entry name" value="HD_domain"/>
</dbReference>
<dbReference type="InterPro" id="IPR026875">
    <property type="entry name" value="PHydrolase_assoc_dom"/>
</dbReference>
<dbReference type="NCBIfam" id="TIGR01353">
    <property type="entry name" value="dGTP_triPase"/>
    <property type="match status" value="1"/>
</dbReference>
<dbReference type="NCBIfam" id="NF002326">
    <property type="entry name" value="PRK01286.1-1"/>
    <property type="match status" value="1"/>
</dbReference>
<dbReference type="PANTHER" id="PTHR11373:SF43">
    <property type="entry name" value="DEOXYGUANOSINETRIPHOSPHATE TRIPHOSPHOHYDROLASE-LIKE PROTEIN"/>
    <property type="match status" value="1"/>
</dbReference>
<dbReference type="PANTHER" id="PTHR11373">
    <property type="entry name" value="DEOXYNUCLEOSIDE TRIPHOSPHATE TRIPHOSPHOHYDROLASE"/>
    <property type="match status" value="1"/>
</dbReference>
<dbReference type="Pfam" id="PF01966">
    <property type="entry name" value="HD"/>
    <property type="match status" value="1"/>
</dbReference>
<dbReference type="Pfam" id="PF13286">
    <property type="entry name" value="HD_assoc"/>
    <property type="match status" value="1"/>
</dbReference>
<dbReference type="SMART" id="SM00471">
    <property type="entry name" value="HDc"/>
    <property type="match status" value="1"/>
</dbReference>
<dbReference type="SUPFAM" id="SSF109604">
    <property type="entry name" value="HD-domain/PDEase-like"/>
    <property type="match status" value="1"/>
</dbReference>
<dbReference type="PROSITE" id="PS51831">
    <property type="entry name" value="HD"/>
    <property type="match status" value="1"/>
</dbReference>